<comment type="sequence caution" evidence="1">
    <conflict type="erroneous initiation">
        <sequence resource="EMBL-CDS" id="AAK47324"/>
    </conflict>
</comment>
<gene>
    <name type="ordered locus">MT2997</name>
</gene>
<protein>
    <recommendedName>
        <fullName>Uncharacterized protein MT2997</fullName>
    </recommendedName>
</protein>
<organism>
    <name type="scientific">Mycobacterium tuberculosis (strain CDC 1551 / Oshkosh)</name>
    <dbReference type="NCBI Taxonomy" id="83331"/>
    <lineage>
        <taxon>Bacteria</taxon>
        <taxon>Bacillati</taxon>
        <taxon>Actinomycetota</taxon>
        <taxon>Actinomycetes</taxon>
        <taxon>Mycobacteriales</taxon>
        <taxon>Mycobacteriaceae</taxon>
        <taxon>Mycobacterium</taxon>
        <taxon>Mycobacterium tuberculosis complex</taxon>
    </lineage>
</organism>
<proteinExistence type="predicted"/>
<dbReference type="EMBL" id="AE000516">
    <property type="protein sequence ID" value="AAK47324.1"/>
    <property type="status" value="ALT_INIT"/>
    <property type="molecule type" value="Genomic_DNA"/>
</dbReference>
<dbReference type="PIR" id="G70748">
    <property type="entry name" value="G70748"/>
</dbReference>
<dbReference type="SMR" id="P9WL14"/>
<dbReference type="KEGG" id="mtc:MT2997"/>
<dbReference type="PATRIC" id="fig|83331.31.peg.3237"/>
<dbReference type="HOGENOM" id="CLU_081796_0_0_11"/>
<dbReference type="Proteomes" id="UP000001020">
    <property type="component" value="Chromosome"/>
</dbReference>
<dbReference type="CDD" id="cd06503">
    <property type="entry name" value="ATP-synt_Fo_b"/>
    <property type="match status" value="1"/>
</dbReference>
<dbReference type="Gene3D" id="1.20.5.620">
    <property type="entry name" value="F1F0 ATP synthase subunit B, membrane domain"/>
    <property type="match status" value="2"/>
</dbReference>
<dbReference type="PANTHER" id="PTHR38010">
    <property type="entry name" value="SLR0848 PROTEIN"/>
    <property type="match status" value="1"/>
</dbReference>
<dbReference type="PANTHER" id="PTHR38010:SF1">
    <property type="entry name" value="SLR0848 PROTEIN"/>
    <property type="match status" value="1"/>
</dbReference>
<evidence type="ECO:0000305" key="1"/>
<reference key="1">
    <citation type="journal article" date="2002" name="J. Bacteriol.">
        <title>Whole-genome comparison of Mycobacterium tuberculosis clinical and laboratory strains.</title>
        <authorList>
            <person name="Fleischmann R.D."/>
            <person name="Alland D."/>
            <person name="Eisen J.A."/>
            <person name="Carpenter L."/>
            <person name="White O."/>
            <person name="Peterson J.D."/>
            <person name="DeBoy R.T."/>
            <person name="Dodson R.J."/>
            <person name="Gwinn M.L."/>
            <person name="Haft D.H."/>
            <person name="Hickey E.K."/>
            <person name="Kolonay J.F."/>
            <person name="Nelson W.C."/>
            <person name="Umayam L.A."/>
            <person name="Ermolaeva M.D."/>
            <person name="Salzberg S.L."/>
            <person name="Delcher A."/>
            <person name="Utterback T.R."/>
            <person name="Weidman J.F."/>
            <person name="Khouri H.M."/>
            <person name="Gill J."/>
            <person name="Mikula A."/>
            <person name="Bishai W."/>
            <person name="Jacobs W.R. Jr."/>
            <person name="Venter J.C."/>
            <person name="Fraser C.M."/>
        </authorList>
    </citation>
    <scope>NUCLEOTIDE SEQUENCE [LARGE SCALE GENOMIC DNA]</scope>
    <source>
        <strain>CDC 1551 / Oshkosh</strain>
    </source>
</reference>
<keyword id="KW-1185">Reference proteome</keyword>
<feature type="chain" id="PRO_0000427558" description="Uncharacterized protein MT2997">
    <location>
        <begin position="1"/>
        <end position="245"/>
    </location>
</feature>
<name>Y2927_MYCTO</name>
<accession>P9WL14</accession>
<accession>L0TB20</accession>
<accession>P65059</accession>
<accession>Q10973</accession>
<sequence length="245" mass="26986">MYRVFEALDELSAIVEEARGVPMTAGCVVPRGDVLELIDDIKDAIPGELDDAQDVLDARDSMLQDAKTHADSMVSSATTEAESILNHARTEADRILSDAKAQADRMVSEARQHSERMVADAREEAIRIATAAKREYEASVSRAQAECDRLIENGNISYEKAVQEGIKEQQRLVSQNEVVAAANAESTRLVDTAHAEADRLRGECDIYVDNKLAEFEEFLNGTLRSVGRGRHQLRTAAGTHDYAVR</sequence>